<keyword id="KW-1185">Reference proteome</keyword>
<keyword id="KW-0687">Ribonucleoprotein</keyword>
<keyword id="KW-0689">Ribosomal protein</keyword>
<protein>
    <recommendedName>
        <fullName evidence="1">Large ribosomal subunit protein bL17</fullName>
    </recommendedName>
    <alternativeName>
        <fullName evidence="2">50S ribosomal protein L17</fullName>
    </alternativeName>
</protein>
<sequence length="141" mass="15322">MRHGVAGRKLGVTSSHRAAMFRNMAVALIKHEQITTTLPKAKELRPVVEKLITLGKRGDLHARRQAYAQLRDDVIVSKLFSAVADRYKARNGGYIRVLKAGIRHGDAADMAVIELVDRDVAAKGQDSGPRPEAAAEDSLAA</sequence>
<reference key="1">
    <citation type="journal article" date="2009" name="BMC Genomics">
        <title>Complete genome sequence of the sugarcane nitrogen-fixing endophyte Gluconacetobacter diazotrophicus Pal5.</title>
        <authorList>
            <person name="Bertalan M."/>
            <person name="Albano R."/>
            <person name="de Padua V."/>
            <person name="Rouws L."/>
            <person name="Rojas C."/>
            <person name="Hemerly A."/>
            <person name="Teixeira K."/>
            <person name="Schwab S."/>
            <person name="Araujo J."/>
            <person name="Oliveira A."/>
            <person name="Franca L."/>
            <person name="Magalhaes V."/>
            <person name="Alqueres S."/>
            <person name="Cardoso A."/>
            <person name="Almeida W."/>
            <person name="Loureiro M.M."/>
            <person name="Nogueira E."/>
            <person name="Cidade D."/>
            <person name="Oliveira D."/>
            <person name="Simao T."/>
            <person name="Macedo J."/>
            <person name="Valadao A."/>
            <person name="Dreschsel M."/>
            <person name="Freitas F."/>
            <person name="Vidal M."/>
            <person name="Guedes H."/>
            <person name="Rodrigues E."/>
            <person name="Meneses C."/>
            <person name="Brioso P."/>
            <person name="Pozzer L."/>
            <person name="Figueiredo D."/>
            <person name="Montano H."/>
            <person name="Junior J."/>
            <person name="de Souza Filho G."/>
            <person name="Martin Quintana Flores V."/>
            <person name="Ferreira B."/>
            <person name="Branco A."/>
            <person name="Gonzalez P."/>
            <person name="Guillobel H."/>
            <person name="Lemos M."/>
            <person name="Seibel L."/>
            <person name="Macedo J."/>
            <person name="Alves-Ferreira M."/>
            <person name="Sachetto-Martins G."/>
            <person name="Coelho A."/>
            <person name="Santos E."/>
            <person name="Amaral G."/>
            <person name="Neves A."/>
            <person name="Pacheco A.B."/>
            <person name="Carvalho D."/>
            <person name="Lery L."/>
            <person name="Bisch P."/>
            <person name="Rossle S.C."/>
            <person name="Urmenyi T."/>
            <person name="Rael Pereira A."/>
            <person name="Silva R."/>
            <person name="Rondinelli E."/>
            <person name="von Kruger W."/>
            <person name="Martins O."/>
            <person name="Baldani J.I."/>
            <person name="Ferreira P.C."/>
        </authorList>
    </citation>
    <scope>NUCLEOTIDE SEQUENCE [LARGE SCALE GENOMIC DNA]</scope>
    <source>
        <strain>ATCC 49037 / DSM 5601 / CCUG 37298 / CIP 103539 / LMG 7603 / PAl5</strain>
    </source>
</reference>
<reference key="2">
    <citation type="journal article" date="2010" name="Stand. Genomic Sci.">
        <title>Two genome sequences of the same bacterial strain, Gluconacetobacter diazotrophicus PAl 5, suggest a new standard in genome sequence submission.</title>
        <authorList>
            <person name="Giongo A."/>
            <person name="Tyler H.L."/>
            <person name="Zipperer U.N."/>
            <person name="Triplett E.W."/>
        </authorList>
    </citation>
    <scope>NUCLEOTIDE SEQUENCE [LARGE SCALE GENOMIC DNA]</scope>
    <source>
        <strain>ATCC 49037 / DSM 5601 / CCUG 37298 / CIP 103539 / LMG 7603 / PAl5</strain>
    </source>
</reference>
<organism>
    <name type="scientific">Gluconacetobacter diazotrophicus (strain ATCC 49037 / DSM 5601 / CCUG 37298 / CIP 103539 / LMG 7603 / PAl5)</name>
    <dbReference type="NCBI Taxonomy" id="272568"/>
    <lineage>
        <taxon>Bacteria</taxon>
        <taxon>Pseudomonadati</taxon>
        <taxon>Pseudomonadota</taxon>
        <taxon>Alphaproteobacteria</taxon>
        <taxon>Acetobacterales</taxon>
        <taxon>Acetobacteraceae</taxon>
        <taxon>Gluconacetobacter</taxon>
    </lineage>
</organism>
<comment type="subunit">
    <text evidence="1">Part of the 50S ribosomal subunit. Contacts protein L32.</text>
</comment>
<comment type="similarity">
    <text evidence="1">Belongs to the bacterial ribosomal protein bL17 family.</text>
</comment>
<gene>
    <name evidence="1" type="primary">rplQ</name>
    <name type="ordered locus">GDI3379</name>
    <name type="ordered locus">Gdia_2991</name>
</gene>
<dbReference type="EMBL" id="AM889285">
    <property type="protein sequence ID" value="CAP57322.1"/>
    <property type="molecule type" value="Genomic_DNA"/>
</dbReference>
<dbReference type="EMBL" id="CP001189">
    <property type="protein sequence ID" value="ACI52721.1"/>
    <property type="molecule type" value="Genomic_DNA"/>
</dbReference>
<dbReference type="RefSeq" id="WP_012227915.1">
    <property type="nucleotide sequence ID" value="NC_010125.1"/>
</dbReference>
<dbReference type="SMR" id="A9H3I6"/>
<dbReference type="STRING" id="272568.GDI3379"/>
<dbReference type="KEGG" id="gdi:GDI3379"/>
<dbReference type="KEGG" id="gdj:Gdia_2991"/>
<dbReference type="eggNOG" id="COG0203">
    <property type="taxonomic scope" value="Bacteria"/>
</dbReference>
<dbReference type="HOGENOM" id="CLU_074407_2_0_5"/>
<dbReference type="OrthoDB" id="9809073at2"/>
<dbReference type="Proteomes" id="UP000001176">
    <property type="component" value="Chromosome"/>
</dbReference>
<dbReference type="GO" id="GO:0022625">
    <property type="term" value="C:cytosolic large ribosomal subunit"/>
    <property type="evidence" value="ECO:0007669"/>
    <property type="project" value="TreeGrafter"/>
</dbReference>
<dbReference type="GO" id="GO:0003735">
    <property type="term" value="F:structural constituent of ribosome"/>
    <property type="evidence" value="ECO:0007669"/>
    <property type="project" value="InterPro"/>
</dbReference>
<dbReference type="GO" id="GO:0006412">
    <property type="term" value="P:translation"/>
    <property type="evidence" value="ECO:0007669"/>
    <property type="project" value="UniProtKB-UniRule"/>
</dbReference>
<dbReference type="FunFam" id="3.90.1030.10:FF:000001">
    <property type="entry name" value="50S ribosomal protein L17"/>
    <property type="match status" value="1"/>
</dbReference>
<dbReference type="Gene3D" id="3.90.1030.10">
    <property type="entry name" value="Ribosomal protein L17"/>
    <property type="match status" value="1"/>
</dbReference>
<dbReference type="HAMAP" id="MF_01368">
    <property type="entry name" value="Ribosomal_bL17"/>
    <property type="match status" value="1"/>
</dbReference>
<dbReference type="InterPro" id="IPR000456">
    <property type="entry name" value="Ribosomal_bL17"/>
</dbReference>
<dbReference type="InterPro" id="IPR047859">
    <property type="entry name" value="Ribosomal_bL17_CS"/>
</dbReference>
<dbReference type="InterPro" id="IPR036373">
    <property type="entry name" value="Ribosomal_bL17_sf"/>
</dbReference>
<dbReference type="NCBIfam" id="TIGR00059">
    <property type="entry name" value="L17"/>
    <property type="match status" value="1"/>
</dbReference>
<dbReference type="PANTHER" id="PTHR14413:SF16">
    <property type="entry name" value="LARGE RIBOSOMAL SUBUNIT PROTEIN BL17M"/>
    <property type="match status" value="1"/>
</dbReference>
<dbReference type="PANTHER" id="PTHR14413">
    <property type="entry name" value="RIBOSOMAL PROTEIN L17"/>
    <property type="match status" value="1"/>
</dbReference>
<dbReference type="Pfam" id="PF01196">
    <property type="entry name" value="Ribosomal_L17"/>
    <property type="match status" value="1"/>
</dbReference>
<dbReference type="SUPFAM" id="SSF64263">
    <property type="entry name" value="Prokaryotic ribosomal protein L17"/>
    <property type="match status" value="1"/>
</dbReference>
<dbReference type="PROSITE" id="PS01167">
    <property type="entry name" value="RIBOSOMAL_L17"/>
    <property type="match status" value="1"/>
</dbReference>
<feature type="chain" id="PRO_1000087175" description="Large ribosomal subunit protein bL17">
    <location>
        <begin position="1"/>
        <end position="141"/>
    </location>
</feature>
<accession>A9H3I6</accession>
<accession>B5ZIT1</accession>
<evidence type="ECO:0000255" key="1">
    <source>
        <dbReference type="HAMAP-Rule" id="MF_01368"/>
    </source>
</evidence>
<evidence type="ECO:0000305" key="2"/>
<name>RL17_GLUDA</name>
<proteinExistence type="inferred from homology"/>